<keyword id="KW-0687">Ribonucleoprotein</keyword>
<keyword id="KW-0689">Ribosomal protein</keyword>
<dbReference type="EMBL" id="CP001048">
    <property type="protein sequence ID" value="ACC90818.1"/>
    <property type="molecule type" value="Genomic_DNA"/>
</dbReference>
<dbReference type="SMR" id="B2K516"/>
<dbReference type="KEGG" id="ypb:YPTS_3869"/>
<dbReference type="PATRIC" id="fig|502801.10.peg.3334"/>
<dbReference type="GO" id="GO:0005737">
    <property type="term" value="C:cytoplasm"/>
    <property type="evidence" value="ECO:0007669"/>
    <property type="project" value="UniProtKB-ARBA"/>
</dbReference>
<dbReference type="GO" id="GO:1990904">
    <property type="term" value="C:ribonucleoprotein complex"/>
    <property type="evidence" value="ECO:0007669"/>
    <property type="project" value="UniProtKB-KW"/>
</dbReference>
<dbReference type="GO" id="GO:0005840">
    <property type="term" value="C:ribosome"/>
    <property type="evidence" value="ECO:0007669"/>
    <property type="project" value="UniProtKB-KW"/>
</dbReference>
<dbReference type="GO" id="GO:0003735">
    <property type="term" value="F:structural constituent of ribosome"/>
    <property type="evidence" value="ECO:0007669"/>
    <property type="project" value="InterPro"/>
</dbReference>
<dbReference type="GO" id="GO:0006412">
    <property type="term" value="P:translation"/>
    <property type="evidence" value="ECO:0007669"/>
    <property type="project" value="UniProtKB-UniRule"/>
</dbReference>
<dbReference type="HAMAP" id="MF_00251">
    <property type="entry name" value="Ribosomal_bL36"/>
    <property type="match status" value="1"/>
</dbReference>
<dbReference type="InterPro" id="IPR000473">
    <property type="entry name" value="Ribosomal_bL36"/>
</dbReference>
<dbReference type="InterPro" id="IPR035977">
    <property type="entry name" value="Ribosomal_bL36_sp"/>
</dbReference>
<dbReference type="NCBIfam" id="TIGR01022">
    <property type="entry name" value="rpmJ_bact"/>
    <property type="match status" value="1"/>
</dbReference>
<dbReference type="PANTHER" id="PTHR42888">
    <property type="entry name" value="50S RIBOSOMAL PROTEIN L36, CHLOROPLASTIC"/>
    <property type="match status" value="1"/>
</dbReference>
<dbReference type="PANTHER" id="PTHR42888:SF1">
    <property type="entry name" value="LARGE RIBOSOMAL SUBUNIT PROTEIN BL36C"/>
    <property type="match status" value="1"/>
</dbReference>
<dbReference type="Pfam" id="PF00444">
    <property type="entry name" value="Ribosomal_L36"/>
    <property type="match status" value="1"/>
</dbReference>
<dbReference type="SUPFAM" id="SSF57840">
    <property type="entry name" value="Ribosomal protein L36"/>
    <property type="match status" value="1"/>
</dbReference>
<dbReference type="PROSITE" id="PS00828">
    <property type="entry name" value="RIBOSOMAL_L36"/>
    <property type="match status" value="1"/>
</dbReference>
<reference key="1">
    <citation type="submission" date="2008-04" db="EMBL/GenBank/DDBJ databases">
        <title>Complete sequence of Yersinia pseudotuberculosis PB1/+.</title>
        <authorList>
            <person name="Copeland A."/>
            <person name="Lucas S."/>
            <person name="Lapidus A."/>
            <person name="Glavina del Rio T."/>
            <person name="Dalin E."/>
            <person name="Tice H."/>
            <person name="Bruce D."/>
            <person name="Goodwin L."/>
            <person name="Pitluck S."/>
            <person name="Munk A.C."/>
            <person name="Brettin T."/>
            <person name="Detter J.C."/>
            <person name="Han C."/>
            <person name="Tapia R."/>
            <person name="Schmutz J."/>
            <person name="Larimer F."/>
            <person name="Land M."/>
            <person name="Hauser L."/>
            <person name="Challacombe J.F."/>
            <person name="Green L."/>
            <person name="Lindler L.E."/>
            <person name="Nikolich M.P."/>
            <person name="Richardson P."/>
        </authorList>
    </citation>
    <scope>NUCLEOTIDE SEQUENCE [LARGE SCALE GENOMIC DNA]</scope>
    <source>
        <strain>PB1/+</strain>
    </source>
</reference>
<comment type="similarity">
    <text evidence="1">Belongs to the bacterial ribosomal protein bL36 family.</text>
</comment>
<evidence type="ECO:0000255" key="1">
    <source>
        <dbReference type="HAMAP-Rule" id="MF_00251"/>
    </source>
</evidence>
<evidence type="ECO:0000305" key="2"/>
<proteinExistence type="inferred from homology"/>
<gene>
    <name evidence="1" type="primary">rpmJ2</name>
    <name type="ordered locus">YPTS_3869</name>
</gene>
<sequence length="38" mass="4349">MKVRASVKKLCRNCKIVKRNGVVRVICSAEPKHKQRQG</sequence>
<accession>B2K516</accession>
<feature type="chain" id="PRO_0000344734" description="Large ribosomal subunit protein bL36B">
    <location>
        <begin position="1"/>
        <end position="38"/>
    </location>
</feature>
<protein>
    <recommendedName>
        <fullName evidence="1">Large ribosomal subunit protein bL36B</fullName>
    </recommendedName>
    <alternativeName>
        <fullName evidence="2">50S ribosomal protein L36 2</fullName>
    </alternativeName>
</protein>
<name>RL362_YERPB</name>
<organism>
    <name type="scientific">Yersinia pseudotuberculosis serotype IB (strain PB1/+)</name>
    <dbReference type="NCBI Taxonomy" id="502801"/>
    <lineage>
        <taxon>Bacteria</taxon>
        <taxon>Pseudomonadati</taxon>
        <taxon>Pseudomonadota</taxon>
        <taxon>Gammaproteobacteria</taxon>
        <taxon>Enterobacterales</taxon>
        <taxon>Yersiniaceae</taxon>
        <taxon>Yersinia</taxon>
    </lineage>
</organism>